<organism>
    <name type="scientific">Hordeum vulgare</name>
    <name type="common">Barley</name>
    <dbReference type="NCBI Taxonomy" id="4513"/>
    <lineage>
        <taxon>Eukaryota</taxon>
        <taxon>Viridiplantae</taxon>
        <taxon>Streptophyta</taxon>
        <taxon>Embryophyta</taxon>
        <taxon>Tracheophyta</taxon>
        <taxon>Spermatophyta</taxon>
        <taxon>Magnoliopsida</taxon>
        <taxon>Liliopsida</taxon>
        <taxon>Poales</taxon>
        <taxon>Poaceae</taxon>
        <taxon>BOP clade</taxon>
        <taxon>Pooideae</taxon>
        <taxon>Triticodae</taxon>
        <taxon>Triticeae</taxon>
        <taxon>Hordeinae</taxon>
        <taxon>Hordeum</taxon>
    </lineage>
</organism>
<keyword id="KW-1015">Disulfide bond</keyword>
<keyword id="KW-0274">FAD</keyword>
<keyword id="KW-0285">Flavoprotein</keyword>
<keyword id="KW-0349">Heme</keyword>
<keyword id="KW-0408">Iron</keyword>
<keyword id="KW-0479">Metal-binding</keyword>
<keyword id="KW-0500">Molybdenum</keyword>
<keyword id="KW-0520">NAD</keyword>
<keyword id="KW-0521">NADP</keyword>
<keyword id="KW-0534">Nitrate assimilation</keyword>
<keyword id="KW-0560">Oxidoreductase</keyword>
<protein>
    <recommendedName>
        <fullName>Nitrate reductase [NAD(P)H]</fullName>
        <ecNumber>1.7.1.2</ecNumber>
    </recommendedName>
</protein>
<reference key="1">
    <citation type="journal article" date="1991" name="Mol. Gen. Genet.">
        <title>Characterization and sequence of a novel nitrate reductase from barley.</title>
        <authorList>
            <person name="Miyazaki J."/>
            <person name="Juricek M."/>
            <person name="Angelis K."/>
            <person name="Schnorr K.M."/>
            <person name="Kleinhofs A."/>
            <person name="Warner R.L."/>
        </authorList>
    </citation>
    <scope>NUCLEOTIDE SEQUENCE [GENOMIC DNA]</scope>
    <source>
        <strain>cv. Himalaya</strain>
    </source>
</reference>
<dbReference type="EC" id="1.7.1.2"/>
<dbReference type="EMBL" id="X60173">
    <property type="protein sequence ID" value="CAA42739.1"/>
    <property type="molecule type" value="Genomic_DNA"/>
</dbReference>
<dbReference type="PIR" id="S16895">
    <property type="entry name" value="RDBHNP"/>
</dbReference>
<dbReference type="SMR" id="P27968"/>
<dbReference type="IntAct" id="P27968">
    <property type="interactions" value="1"/>
</dbReference>
<dbReference type="ExpressionAtlas" id="P27968">
    <property type="expression patterns" value="baseline and differential"/>
</dbReference>
<dbReference type="GO" id="GO:0031090">
    <property type="term" value="C:organelle membrane"/>
    <property type="evidence" value="ECO:0007669"/>
    <property type="project" value="UniProtKB-ARBA"/>
</dbReference>
<dbReference type="GO" id="GO:0071949">
    <property type="term" value="F:FAD binding"/>
    <property type="evidence" value="ECO:0000250"/>
    <property type="project" value="UniProtKB"/>
</dbReference>
<dbReference type="GO" id="GO:0020037">
    <property type="term" value="F:heme binding"/>
    <property type="evidence" value="ECO:0007669"/>
    <property type="project" value="InterPro"/>
</dbReference>
<dbReference type="GO" id="GO:0030151">
    <property type="term" value="F:molybdenum ion binding"/>
    <property type="evidence" value="ECO:0000250"/>
    <property type="project" value="UniProtKB"/>
</dbReference>
<dbReference type="GO" id="GO:0043546">
    <property type="term" value="F:molybdopterin cofactor binding"/>
    <property type="evidence" value="ECO:0007669"/>
    <property type="project" value="InterPro"/>
</dbReference>
<dbReference type="GO" id="GO:0009703">
    <property type="term" value="F:nitrate reductase (NADH) activity"/>
    <property type="evidence" value="ECO:0007669"/>
    <property type="project" value="RHEA"/>
</dbReference>
<dbReference type="GO" id="GO:0050464">
    <property type="term" value="F:nitrate reductase (NADPH) activity"/>
    <property type="evidence" value="ECO:0007669"/>
    <property type="project" value="InterPro"/>
</dbReference>
<dbReference type="GO" id="GO:0008482">
    <property type="term" value="F:sulfite oxidase activity"/>
    <property type="evidence" value="ECO:0007669"/>
    <property type="project" value="TreeGrafter"/>
</dbReference>
<dbReference type="GO" id="GO:0042128">
    <property type="term" value="P:nitrate assimilation"/>
    <property type="evidence" value="ECO:0007669"/>
    <property type="project" value="UniProtKB-KW"/>
</dbReference>
<dbReference type="GO" id="GO:0006809">
    <property type="term" value="P:nitric oxide biosynthetic process"/>
    <property type="evidence" value="ECO:0007669"/>
    <property type="project" value="InterPro"/>
</dbReference>
<dbReference type="GO" id="GO:0006790">
    <property type="term" value="P:sulfur compound metabolic process"/>
    <property type="evidence" value="ECO:0007669"/>
    <property type="project" value="TreeGrafter"/>
</dbReference>
<dbReference type="CDD" id="cd06183">
    <property type="entry name" value="cyt_b5_reduct_like"/>
    <property type="match status" value="1"/>
</dbReference>
<dbReference type="CDD" id="cd02112">
    <property type="entry name" value="eukary_NR_Moco"/>
    <property type="match status" value="1"/>
</dbReference>
<dbReference type="FunFam" id="2.40.30.10:FF:000021">
    <property type="entry name" value="NADH-cytochrome b5 reductase"/>
    <property type="match status" value="1"/>
</dbReference>
<dbReference type="FunFam" id="2.60.40.650:FF:000001">
    <property type="entry name" value="Nitrate reductase"/>
    <property type="match status" value="1"/>
</dbReference>
<dbReference type="FunFam" id="3.90.420.10:FF:000003">
    <property type="entry name" value="Nitrate reductase"/>
    <property type="match status" value="1"/>
</dbReference>
<dbReference type="FunFam" id="3.40.50.80:FF:000025">
    <property type="entry name" value="Nitrate reductase [NADH]"/>
    <property type="match status" value="1"/>
</dbReference>
<dbReference type="FunFam" id="3.10.120.10:FF:000007">
    <property type="entry name" value="Sulfite oxidase, mitochondrial"/>
    <property type="match status" value="1"/>
</dbReference>
<dbReference type="Gene3D" id="2.60.40.650">
    <property type="match status" value="1"/>
</dbReference>
<dbReference type="Gene3D" id="3.10.120.10">
    <property type="entry name" value="Cytochrome b5-like heme/steroid binding domain"/>
    <property type="match status" value="1"/>
</dbReference>
<dbReference type="Gene3D" id="3.40.50.80">
    <property type="entry name" value="Nucleotide-binding domain of ferredoxin-NADP reductase (FNR) module"/>
    <property type="match status" value="1"/>
</dbReference>
<dbReference type="Gene3D" id="3.90.420.10">
    <property type="entry name" value="Oxidoreductase, molybdopterin-binding domain"/>
    <property type="match status" value="1"/>
</dbReference>
<dbReference type="Gene3D" id="2.40.30.10">
    <property type="entry name" value="Translation factors"/>
    <property type="match status" value="1"/>
</dbReference>
<dbReference type="InterPro" id="IPR008333">
    <property type="entry name" value="Cbr1-like_FAD-bd_dom"/>
</dbReference>
<dbReference type="InterPro" id="IPR001199">
    <property type="entry name" value="Cyt_B5-like_heme/steroid-bd"/>
</dbReference>
<dbReference type="InterPro" id="IPR036400">
    <property type="entry name" value="Cyt_B5-like_heme/steroid_sf"/>
</dbReference>
<dbReference type="InterPro" id="IPR018506">
    <property type="entry name" value="Cyt_B5_heme-BS"/>
</dbReference>
<dbReference type="InterPro" id="IPR017927">
    <property type="entry name" value="FAD-bd_FR_type"/>
</dbReference>
<dbReference type="InterPro" id="IPR001709">
    <property type="entry name" value="Flavoprot_Pyr_Nucl_cyt_Rdtase"/>
</dbReference>
<dbReference type="InterPro" id="IPR039261">
    <property type="entry name" value="FNR_nucleotide-bd"/>
</dbReference>
<dbReference type="InterPro" id="IPR014756">
    <property type="entry name" value="Ig_E-set"/>
</dbReference>
<dbReference type="InterPro" id="IPR005066">
    <property type="entry name" value="MoCF_OxRdtse_dimer"/>
</dbReference>
<dbReference type="InterPro" id="IPR008335">
    <property type="entry name" value="Mopterin_OxRdtase_euk"/>
</dbReference>
<dbReference type="InterPro" id="IPR012137">
    <property type="entry name" value="Nitr_rd_NADH"/>
</dbReference>
<dbReference type="InterPro" id="IPR001433">
    <property type="entry name" value="OxRdtase_FAD/NAD-bd"/>
</dbReference>
<dbReference type="InterPro" id="IPR000572">
    <property type="entry name" value="OxRdtase_Mopterin-bd_dom"/>
</dbReference>
<dbReference type="InterPro" id="IPR036374">
    <property type="entry name" value="OxRdtase_Mopterin-bd_sf"/>
</dbReference>
<dbReference type="InterPro" id="IPR022407">
    <property type="entry name" value="OxRdtase_Mopterin_BS"/>
</dbReference>
<dbReference type="InterPro" id="IPR017938">
    <property type="entry name" value="Riboflavin_synthase-like_b-brl"/>
</dbReference>
<dbReference type="PANTHER" id="PTHR19372:SF7">
    <property type="entry name" value="SULFITE OXIDASE, MITOCHONDRIAL"/>
    <property type="match status" value="1"/>
</dbReference>
<dbReference type="PANTHER" id="PTHR19372">
    <property type="entry name" value="SULFITE REDUCTASE"/>
    <property type="match status" value="1"/>
</dbReference>
<dbReference type="Pfam" id="PF00173">
    <property type="entry name" value="Cyt-b5"/>
    <property type="match status" value="1"/>
</dbReference>
<dbReference type="Pfam" id="PF00970">
    <property type="entry name" value="FAD_binding_6"/>
    <property type="match status" value="1"/>
</dbReference>
<dbReference type="Pfam" id="PF03404">
    <property type="entry name" value="Mo-co_dimer"/>
    <property type="match status" value="1"/>
</dbReference>
<dbReference type="Pfam" id="PF00175">
    <property type="entry name" value="NAD_binding_1"/>
    <property type="match status" value="1"/>
</dbReference>
<dbReference type="Pfam" id="PF00174">
    <property type="entry name" value="Oxidored_molyb"/>
    <property type="match status" value="1"/>
</dbReference>
<dbReference type="PIRSF" id="PIRSF000233">
    <property type="entry name" value="Nitr_rd_NADH"/>
    <property type="match status" value="1"/>
</dbReference>
<dbReference type="PRINTS" id="PR00406">
    <property type="entry name" value="CYTB5RDTASE"/>
</dbReference>
<dbReference type="PRINTS" id="PR00363">
    <property type="entry name" value="CYTOCHROMEB5"/>
</dbReference>
<dbReference type="PRINTS" id="PR00407">
    <property type="entry name" value="EUMOPTERIN"/>
</dbReference>
<dbReference type="PRINTS" id="PR00371">
    <property type="entry name" value="FPNCR"/>
</dbReference>
<dbReference type="SMART" id="SM01117">
    <property type="entry name" value="Cyt-b5"/>
    <property type="match status" value="1"/>
</dbReference>
<dbReference type="SUPFAM" id="SSF55856">
    <property type="entry name" value="Cytochrome b5-like heme/steroid binding domain"/>
    <property type="match status" value="1"/>
</dbReference>
<dbReference type="SUPFAM" id="SSF81296">
    <property type="entry name" value="E set domains"/>
    <property type="match status" value="1"/>
</dbReference>
<dbReference type="SUPFAM" id="SSF52343">
    <property type="entry name" value="Ferredoxin reductase-like, C-terminal NADP-linked domain"/>
    <property type="match status" value="1"/>
</dbReference>
<dbReference type="SUPFAM" id="SSF56524">
    <property type="entry name" value="Oxidoreductase molybdopterin-binding domain"/>
    <property type="match status" value="1"/>
</dbReference>
<dbReference type="SUPFAM" id="SSF63380">
    <property type="entry name" value="Riboflavin synthase domain-like"/>
    <property type="match status" value="1"/>
</dbReference>
<dbReference type="PROSITE" id="PS00191">
    <property type="entry name" value="CYTOCHROME_B5_1"/>
    <property type="match status" value="1"/>
</dbReference>
<dbReference type="PROSITE" id="PS50255">
    <property type="entry name" value="CYTOCHROME_B5_2"/>
    <property type="match status" value="1"/>
</dbReference>
<dbReference type="PROSITE" id="PS51384">
    <property type="entry name" value="FAD_FR"/>
    <property type="match status" value="1"/>
</dbReference>
<dbReference type="PROSITE" id="PS00559">
    <property type="entry name" value="MOLYBDOPTERIN_EUK"/>
    <property type="match status" value="1"/>
</dbReference>
<comment type="function">
    <text>Nitrate reductase is a key enzyme involved in the first step of nitrate assimilation in plants, fungi and bacteria.</text>
</comment>
<comment type="catalytic activity">
    <reaction>
        <text>nitrite + NAD(+) + H2O = nitrate + NADH + H(+)</text>
        <dbReference type="Rhea" id="RHEA:17913"/>
        <dbReference type="ChEBI" id="CHEBI:15377"/>
        <dbReference type="ChEBI" id="CHEBI:15378"/>
        <dbReference type="ChEBI" id="CHEBI:16301"/>
        <dbReference type="ChEBI" id="CHEBI:17632"/>
        <dbReference type="ChEBI" id="CHEBI:57540"/>
        <dbReference type="ChEBI" id="CHEBI:57945"/>
        <dbReference type="EC" id="1.7.1.2"/>
    </reaction>
</comment>
<comment type="catalytic activity">
    <reaction>
        <text>nitrite + NADP(+) + H2O = nitrate + NADPH + H(+)</text>
        <dbReference type="Rhea" id="RHEA:19061"/>
        <dbReference type="ChEBI" id="CHEBI:15377"/>
        <dbReference type="ChEBI" id="CHEBI:15378"/>
        <dbReference type="ChEBI" id="CHEBI:16301"/>
        <dbReference type="ChEBI" id="CHEBI:17632"/>
        <dbReference type="ChEBI" id="CHEBI:57783"/>
        <dbReference type="ChEBI" id="CHEBI:58349"/>
        <dbReference type="EC" id="1.7.1.2"/>
    </reaction>
</comment>
<comment type="cofactor">
    <cofactor evidence="1">
        <name>FAD</name>
        <dbReference type="ChEBI" id="CHEBI:57692"/>
    </cofactor>
    <text evidence="1">Binds 1 FAD per subunit.</text>
</comment>
<comment type="cofactor">
    <cofactor evidence="1">
        <name>heme</name>
        <dbReference type="ChEBI" id="CHEBI:30413"/>
    </cofactor>
    <text evidence="1">Binds 1 heme group per subunit.</text>
</comment>
<comment type="cofactor">
    <cofactor evidence="1">
        <name>Mo-molybdopterin</name>
        <dbReference type="ChEBI" id="CHEBI:71302"/>
    </cofactor>
    <text evidence="1">Binds 1 Mo-molybdopterin (Mo-MPT) cofactor per subunit.</text>
</comment>
<comment type="subunit">
    <text>Homodimer.</text>
</comment>
<comment type="induction">
    <text>By nitrate.</text>
</comment>
<comment type="similarity">
    <text evidence="9">Belongs to the nitrate reductase family.</text>
</comment>
<proteinExistence type="evidence at transcript level"/>
<feature type="chain" id="PRO_0000166058" description="Nitrate reductase [NAD(P)H]">
    <location>
        <begin position="1"/>
        <end position="891"/>
    </location>
</feature>
<feature type="domain" description="Cytochrome b5 heme-binding" evidence="6">
    <location>
        <begin position="515"/>
        <end position="590"/>
    </location>
</feature>
<feature type="domain" description="FAD-binding FR-type" evidence="7">
    <location>
        <begin position="630"/>
        <end position="742"/>
    </location>
</feature>
<feature type="region of interest" description="Disordered" evidence="8">
    <location>
        <begin position="1"/>
        <end position="78"/>
    </location>
</feature>
<feature type="compositionally biased region" description="Basic and acidic residues" evidence="8">
    <location>
        <begin position="63"/>
        <end position="76"/>
    </location>
</feature>
<feature type="binding site" evidence="4">
    <location>
        <position position="168"/>
    </location>
    <ligand>
        <name>Mo-molybdopterin</name>
        <dbReference type="ChEBI" id="CHEBI:71302"/>
    </ligand>
    <ligandPart>
        <name>Mo</name>
        <dbReference type="ChEBI" id="CHEBI:28685"/>
    </ligandPart>
</feature>
<feature type="binding site" description="axial binding residue" evidence="6">
    <location>
        <position position="550"/>
    </location>
    <ligand>
        <name>heme</name>
        <dbReference type="ChEBI" id="CHEBI:30413"/>
    </ligand>
    <ligandPart>
        <name>Fe</name>
        <dbReference type="ChEBI" id="CHEBI:18248"/>
    </ligandPart>
</feature>
<feature type="binding site" description="axial binding residue" evidence="6">
    <location>
        <position position="573"/>
    </location>
    <ligand>
        <name>heme</name>
        <dbReference type="ChEBI" id="CHEBI:30413"/>
    </ligand>
    <ligandPart>
        <name>Fe</name>
        <dbReference type="ChEBI" id="CHEBI:18248"/>
    </ligandPart>
</feature>
<feature type="binding site" evidence="2">
    <location>
        <begin position="682"/>
        <end position="685"/>
    </location>
    <ligand>
        <name>FAD</name>
        <dbReference type="ChEBI" id="CHEBI:57692"/>
    </ligand>
</feature>
<feature type="binding site" evidence="2">
    <location>
        <begin position="699"/>
        <end position="703"/>
    </location>
    <ligand>
        <name>FAD</name>
        <dbReference type="ChEBI" id="CHEBI:57692"/>
    </ligand>
</feature>
<feature type="binding site" evidence="3">
    <location>
        <position position="704"/>
    </location>
    <ligand>
        <name>FAD</name>
        <dbReference type="ChEBI" id="CHEBI:57692"/>
    </ligand>
</feature>
<feature type="binding site" evidence="2">
    <location>
        <position position="711"/>
    </location>
    <ligand>
        <name>FAD</name>
        <dbReference type="ChEBI" id="CHEBI:57692"/>
    </ligand>
</feature>
<feature type="binding site" evidence="2">
    <location>
        <begin position="716"/>
        <end position="718"/>
    </location>
    <ligand>
        <name>FAD</name>
        <dbReference type="ChEBI" id="CHEBI:57692"/>
    </ligand>
</feature>
<feature type="binding site" evidence="2">
    <location>
        <position position="769"/>
    </location>
    <ligand>
        <name>FAD</name>
        <dbReference type="ChEBI" id="CHEBI:57692"/>
    </ligand>
</feature>
<feature type="disulfide bond" description="Interchain" evidence="5">
    <location>
        <position position="406"/>
    </location>
</feature>
<name>NIA7_HORVU</name>
<gene>
    <name type="primary">NAR-7</name>
</gene>
<sequence length="891" mass="98630">MAASVEYNRQVSAHPWPTNAQPKAAFDLFSSSGGGRRRSGADSDSDDEDSVPPDWRSLYSPRLDVEPSVKDPRDEATSDAWVKRHPALVRLTGKHPFNSEPPLPRLMSHGFITPVPLHYVRNHGAVPKADWSTWTVEVTGLVKRPVKFTMEELVTGFQAVEFPVTLVCAGNRRKEQNMVRQSSGFNWGPGAISTTVWRGVRLRDVLRRCGVMGAGAASNVCFEGAEDLPGGGGCKYGTSLRRSVAMDPARDVILAYMQNGEPLAPDHGFPVRVIVPGFIGGRMVKWLKRIVVACNESESYYHYRDNRVLPSHVDAELANAEAWWYKPECMINELNINSVITTPGHDEVLPINALTTQKPYTMKGYAYSGGGRKVTRVEVTLDGGETWQVCDLEHPERPTKYGKYWCWCFWSVEVEVLELLGAKEMAVRAWDEALNTQPERLIWNLMGMMNNCWFRVKINVCRPHKGEIGLVFDHPTQPGNQSGGWMARQKHIETSETTQGTLKRSTSTPFMSTASAQFTMSEVRRHASKDSAWIVVHGHVYDCTAFLKDHPGGADSILINAGSDCTEEFDAIHSAKARGLLEMYRVGELIVTGNDYSPQSSNADLAAIVEAPAVVVPRLPASAVALANPREKVRCRLVDKKSMSHNVRLFRFALPSPDQKLGLPVGKHVYVCASTGGKLCMRAYTPTSSVEEVGHVELLIKIYFKDEDPKFPAGGLMSQYLDALPLGAPVDIKGPVGHIEYAGRGAFTVGGERRFARRLAMVAGGTGITPVYQVIQAVLRDQPDDTTEMHLVYANRTEDDMLLREEIDRWAAANPARLKVWYVVSKVGRPEDAWEYGVGRVDEQVLREHLPLGGDGETLALVCGPPAMLECTVRPGLEKMGYDLDKDCLVF</sequence>
<accession>P27968</accession>
<evidence type="ECO:0000250" key="1"/>
<evidence type="ECO:0000250" key="2">
    <source>
        <dbReference type="UniProtKB" id="A0A286R227"/>
    </source>
</evidence>
<evidence type="ECO:0000250" key="3">
    <source>
        <dbReference type="UniProtKB" id="P17571"/>
    </source>
</evidence>
<evidence type="ECO:0000250" key="4">
    <source>
        <dbReference type="UniProtKB" id="P49050"/>
    </source>
</evidence>
<evidence type="ECO:0000255" key="5"/>
<evidence type="ECO:0000255" key="6">
    <source>
        <dbReference type="PROSITE-ProRule" id="PRU00279"/>
    </source>
</evidence>
<evidence type="ECO:0000255" key="7">
    <source>
        <dbReference type="PROSITE-ProRule" id="PRU00716"/>
    </source>
</evidence>
<evidence type="ECO:0000256" key="8">
    <source>
        <dbReference type="SAM" id="MobiDB-lite"/>
    </source>
</evidence>
<evidence type="ECO:0000305" key="9"/>